<protein>
    <recommendedName>
        <fullName evidence="1">Polyribonucleotide nucleotidyltransferase</fullName>
        <ecNumber evidence="1">2.7.7.8</ecNumber>
    </recommendedName>
    <alternativeName>
        <fullName evidence="1">Polynucleotide phosphorylase</fullName>
        <shortName evidence="1">PNPase</shortName>
    </alternativeName>
</protein>
<evidence type="ECO:0000255" key="1">
    <source>
        <dbReference type="HAMAP-Rule" id="MF_01595"/>
    </source>
</evidence>
<evidence type="ECO:0000256" key="2">
    <source>
        <dbReference type="SAM" id="MobiDB-lite"/>
    </source>
</evidence>
<evidence type="ECO:0000305" key="3"/>
<sequence>MLNPIVRKFQYGQHTVTLETGMMARQATAAVMVSMDDTAVFVTVVGQKKAKPGQDFFPLTVNYQERTYAAGRIPGSFFRREGRPSEGETLIARLIDRPIRPLFPEGFVNEVQVIATVVSVNPQVNPDIVAMIGASAALSLSGIPFNGPIGAARVGYINDQYVLNPTQDELKESKLDLVVAGTEAAVLMVESEAELLSEDQMLGAVVFGHEQQQVVIQNINELVKEAGKPRWDWQPEPVNEALNARVAALAEARLSDAYRITDKQERYAQVDVIKSETIATLLAEDETLDENELGEILHAIEKNVVRSRVLAGEPRIDGREKDMIRGLDVRTGVLPRTHGSALFTRGETQALVTATLGTARDAQVLDELMGERTDTFLFHYNFPPYSVGETGMVGSPKRREIGHGRLAKRGVLAVMPDMDKFPYTVRVVSEITESNGSSSMASVCGASLALMDAGVPIKAAVAGIAMGLVKEGDNYVVLSDILGDEDHLGDMDFKVAGSRDGISALQMDIKIEGITKEIMQVALNQAKGARLHILGVMEQAINAPRGDISEFAPRIHTIKINPDKIKDVIGKGGSVIRALTEETGTTIEIEDDGTVKIAATDGEKAKHAIRRIEEITAEIEVGRVYTGKVTRIVDFGAFVAIGGGKEGLVHISQIADKRVEKVTDYLQMGQEVPVKVLEVDRQGRIRLSIKEATEQSQPAAAPEAPAAEQGE</sequence>
<feature type="chain" id="PRO_0000381889" description="Polyribonucleotide nucleotidyltransferase">
    <location>
        <begin position="1"/>
        <end position="711"/>
    </location>
</feature>
<feature type="domain" description="KH" evidence="1">
    <location>
        <begin position="553"/>
        <end position="612"/>
    </location>
</feature>
<feature type="domain" description="S1 motif" evidence="1">
    <location>
        <begin position="622"/>
        <end position="690"/>
    </location>
</feature>
<feature type="region of interest" description="Disordered" evidence="2">
    <location>
        <begin position="689"/>
        <end position="711"/>
    </location>
</feature>
<feature type="compositionally biased region" description="Low complexity" evidence="2">
    <location>
        <begin position="694"/>
        <end position="711"/>
    </location>
</feature>
<feature type="binding site" evidence="1">
    <location>
        <position position="486"/>
    </location>
    <ligand>
        <name>Mg(2+)</name>
        <dbReference type="ChEBI" id="CHEBI:18420"/>
    </ligand>
</feature>
<feature type="binding site" evidence="1">
    <location>
        <position position="492"/>
    </location>
    <ligand>
        <name>Mg(2+)</name>
        <dbReference type="ChEBI" id="CHEBI:18420"/>
    </ligand>
</feature>
<accession>B6I1N9</accession>
<gene>
    <name evidence="1" type="primary">pnp</name>
    <name type="ordered locus">ECSE_3450</name>
</gene>
<proteinExistence type="inferred from homology"/>
<name>PNP_ECOSE</name>
<organism>
    <name type="scientific">Escherichia coli (strain SE11)</name>
    <dbReference type="NCBI Taxonomy" id="409438"/>
    <lineage>
        <taxon>Bacteria</taxon>
        <taxon>Pseudomonadati</taxon>
        <taxon>Pseudomonadota</taxon>
        <taxon>Gammaproteobacteria</taxon>
        <taxon>Enterobacterales</taxon>
        <taxon>Enterobacteriaceae</taxon>
        <taxon>Escherichia</taxon>
    </lineage>
</organism>
<reference key="1">
    <citation type="journal article" date="2008" name="DNA Res.">
        <title>Complete genome sequence and comparative analysis of the wild-type commensal Escherichia coli strain SE11 isolated from a healthy adult.</title>
        <authorList>
            <person name="Oshima K."/>
            <person name="Toh H."/>
            <person name="Ogura Y."/>
            <person name="Sasamoto H."/>
            <person name="Morita H."/>
            <person name="Park S.-H."/>
            <person name="Ooka T."/>
            <person name="Iyoda S."/>
            <person name="Taylor T.D."/>
            <person name="Hayashi T."/>
            <person name="Itoh K."/>
            <person name="Hattori M."/>
        </authorList>
    </citation>
    <scope>NUCLEOTIDE SEQUENCE [LARGE SCALE GENOMIC DNA]</scope>
    <source>
        <strain>SE11</strain>
    </source>
</reference>
<dbReference type="EC" id="2.7.7.8" evidence="1"/>
<dbReference type="EMBL" id="AP009240">
    <property type="protein sequence ID" value="BAG78974.1"/>
    <property type="status" value="ALT_INIT"/>
    <property type="molecule type" value="Genomic_DNA"/>
</dbReference>
<dbReference type="RefSeq" id="WP_001298740.1">
    <property type="nucleotide sequence ID" value="NC_011415.1"/>
</dbReference>
<dbReference type="BMRB" id="B6I1N9"/>
<dbReference type="SMR" id="B6I1N9"/>
<dbReference type="GeneID" id="93778819"/>
<dbReference type="KEGG" id="ecy:ECSE_3450"/>
<dbReference type="HOGENOM" id="CLU_004217_2_2_6"/>
<dbReference type="Proteomes" id="UP000008199">
    <property type="component" value="Chromosome"/>
</dbReference>
<dbReference type="GO" id="GO:0005829">
    <property type="term" value="C:cytosol"/>
    <property type="evidence" value="ECO:0007669"/>
    <property type="project" value="TreeGrafter"/>
</dbReference>
<dbReference type="GO" id="GO:0000175">
    <property type="term" value="F:3'-5'-RNA exonuclease activity"/>
    <property type="evidence" value="ECO:0007669"/>
    <property type="project" value="TreeGrafter"/>
</dbReference>
<dbReference type="GO" id="GO:0000287">
    <property type="term" value="F:magnesium ion binding"/>
    <property type="evidence" value="ECO:0007669"/>
    <property type="project" value="UniProtKB-UniRule"/>
</dbReference>
<dbReference type="GO" id="GO:0004654">
    <property type="term" value="F:polyribonucleotide nucleotidyltransferase activity"/>
    <property type="evidence" value="ECO:0007669"/>
    <property type="project" value="UniProtKB-UniRule"/>
</dbReference>
<dbReference type="GO" id="GO:0003723">
    <property type="term" value="F:RNA binding"/>
    <property type="evidence" value="ECO:0007669"/>
    <property type="project" value="UniProtKB-UniRule"/>
</dbReference>
<dbReference type="GO" id="GO:0006402">
    <property type="term" value="P:mRNA catabolic process"/>
    <property type="evidence" value="ECO:0007669"/>
    <property type="project" value="UniProtKB-UniRule"/>
</dbReference>
<dbReference type="GO" id="GO:0006396">
    <property type="term" value="P:RNA processing"/>
    <property type="evidence" value="ECO:0007669"/>
    <property type="project" value="InterPro"/>
</dbReference>
<dbReference type="CDD" id="cd02393">
    <property type="entry name" value="KH-I_PNPase"/>
    <property type="match status" value="1"/>
</dbReference>
<dbReference type="CDD" id="cd11363">
    <property type="entry name" value="RNase_PH_PNPase_1"/>
    <property type="match status" value="1"/>
</dbReference>
<dbReference type="CDD" id="cd11364">
    <property type="entry name" value="RNase_PH_PNPase_2"/>
    <property type="match status" value="1"/>
</dbReference>
<dbReference type="CDD" id="cd04472">
    <property type="entry name" value="S1_PNPase"/>
    <property type="match status" value="1"/>
</dbReference>
<dbReference type="FunFam" id="2.40.50.140:FF:000023">
    <property type="entry name" value="Polyribonucleotide nucleotidyltransferase"/>
    <property type="match status" value="1"/>
</dbReference>
<dbReference type="FunFam" id="3.30.1370.10:FF:000001">
    <property type="entry name" value="Polyribonucleotide nucleotidyltransferase"/>
    <property type="match status" value="1"/>
</dbReference>
<dbReference type="FunFam" id="3.30.230.70:FF:000001">
    <property type="entry name" value="Polyribonucleotide nucleotidyltransferase"/>
    <property type="match status" value="1"/>
</dbReference>
<dbReference type="FunFam" id="3.30.230.70:FF:000002">
    <property type="entry name" value="Polyribonucleotide nucleotidyltransferase"/>
    <property type="match status" value="1"/>
</dbReference>
<dbReference type="Gene3D" id="3.30.230.70">
    <property type="entry name" value="GHMP Kinase, N-terminal domain"/>
    <property type="match status" value="2"/>
</dbReference>
<dbReference type="Gene3D" id="3.30.1370.10">
    <property type="entry name" value="K Homology domain, type 1"/>
    <property type="match status" value="1"/>
</dbReference>
<dbReference type="Gene3D" id="2.40.50.140">
    <property type="entry name" value="Nucleic acid-binding proteins"/>
    <property type="match status" value="1"/>
</dbReference>
<dbReference type="HAMAP" id="MF_01595">
    <property type="entry name" value="PNPase"/>
    <property type="match status" value="1"/>
</dbReference>
<dbReference type="InterPro" id="IPR001247">
    <property type="entry name" value="ExoRNase_PH_dom1"/>
</dbReference>
<dbReference type="InterPro" id="IPR015847">
    <property type="entry name" value="ExoRNase_PH_dom2"/>
</dbReference>
<dbReference type="InterPro" id="IPR036345">
    <property type="entry name" value="ExoRNase_PH_dom2_sf"/>
</dbReference>
<dbReference type="InterPro" id="IPR004087">
    <property type="entry name" value="KH_dom"/>
</dbReference>
<dbReference type="InterPro" id="IPR004088">
    <property type="entry name" value="KH_dom_type_1"/>
</dbReference>
<dbReference type="InterPro" id="IPR036612">
    <property type="entry name" value="KH_dom_type_1_sf"/>
</dbReference>
<dbReference type="InterPro" id="IPR012340">
    <property type="entry name" value="NA-bd_OB-fold"/>
</dbReference>
<dbReference type="InterPro" id="IPR012162">
    <property type="entry name" value="PNPase"/>
</dbReference>
<dbReference type="InterPro" id="IPR027408">
    <property type="entry name" value="PNPase/RNase_PH_dom_sf"/>
</dbReference>
<dbReference type="InterPro" id="IPR015848">
    <property type="entry name" value="PNPase_PH_RNA-bd_bac/org-type"/>
</dbReference>
<dbReference type="InterPro" id="IPR036456">
    <property type="entry name" value="PNPase_PH_RNA-bd_sf"/>
</dbReference>
<dbReference type="InterPro" id="IPR020568">
    <property type="entry name" value="Ribosomal_Su5_D2-typ_SF"/>
</dbReference>
<dbReference type="InterPro" id="IPR003029">
    <property type="entry name" value="S1_domain"/>
</dbReference>
<dbReference type="NCBIfam" id="TIGR03591">
    <property type="entry name" value="polynuc_phos"/>
    <property type="match status" value="1"/>
</dbReference>
<dbReference type="NCBIfam" id="NF008805">
    <property type="entry name" value="PRK11824.1"/>
    <property type="match status" value="1"/>
</dbReference>
<dbReference type="PANTHER" id="PTHR11252">
    <property type="entry name" value="POLYRIBONUCLEOTIDE NUCLEOTIDYLTRANSFERASE"/>
    <property type="match status" value="1"/>
</dbReference>
<dbReference type="PANTHER" id="PTHR11252:SF0">
    <property type="entry name" value="POLYRIBONUCLEOTIDE NUCLEOTIDYLTRANSFERASE 1, MITOCHONDRIAL"/>
    <property type="match status" value="1"/>
</dbReference>
<dbReference type="Pfam" id="PF00013">
    <property type="entry name" value="KH_1"/>
    <property type="match status" value="1"/>
</dbReference>
<dbReference type="Pfam" id="PF03726">
    <property type="entry name" value="PNPase"/>
    <property type="match status" value="1"/>
</dbReference>
<dbReference type="Pfam" id="PF01138">
    <property type="entry name" value="RNase_PH"/>
    <property type="match status" value="2"/>
</dbReference>
<dbReference type="Pfam" id="PF03725">
    <property type="entry name" value="RNase_PH_C"/>
    <property type="match status" value="2"/>
</dbReference>
<dbReference type="Pfam" id="PF00575">
    <property type="entry name" value="S1"/>
    <property type="match status" value="1"/>
</dbReference>
<dbReference type="PIRSF" id="PIRSF005499">
    <property type="entry name" value="PNPase"/>
    <property type="match status" value="1"/>
</dbReference>
<dbReference type="SMART" id="SM00322">
    <property type="entry name" value="KH"/>
    <property type="match status" value="1"/>
</dbReference>
<dbReference type="SMART" id="SM00316">
    <property type="entry name" value="S1"/>
    <property type="match status" value="1"/>
</dbReference>
<dbReference type="SUPFAM" id="SSF54791">
    <property type="entry name" value="Eukaryotic type KH-domain (KH-domain type I)"/>
    <property type="match status" value="1"/>
</dbReference>
<dbReference type="SUPFAM" id="SSF50249">
    <property type="entry name" value="Nucleic acid-binding proteins"/>
    <property type="match status" value="1"/>
</dbReference>
<dbReference type="SUPFAM" id="SSF46915">
    <property type="entry name" value="Polynucleotide phosphorylase/guanosine pentaphosphate synthase (PNPase/GPSI), domain 3"/>
    <property type="match status" value="1"/>
</dbReference>
<dbReference type="SUPFAM" id="SSF55666">
    <property type="entry name" value="Ribonuclease PH domain 2-like"/>
    <property type="match status" value="2"/>
</dbReference>
<dbReference type="SUPFAM" id="SSF54211">
    <property type="entry name" value="Ribosomal protein S5 domain 2-like"/>
    <property type="match status" value="2"/>
</dbReference>
<dbReference type="PROSITE" id="PS50084">
    <property type="entry name" value="KH_TYPE_1"/>
    <property type="match status" value="1"/>
</dbReference>
<dbReference type="PROSITE" id="PS50126">
    <property type="entry name" value="S1"/>
    <property type="match status" value="1"/>
</dbReference>
<comment type="function">
    <text evidence="1">Involved in mRNA degradation. Catalyzes the phosphorolysis of single-stranded polyribonucleotides processively in the 3'- to 5'-direction.</text>
</comment>
<comment type="catalytic activity">
    <reaction evidence="1">
        <text>RNA(n+1) + phosphate = RNA(n) + a ribonucleoside 5'-diphosphate</text>
        <dbReference type="Rhea" id="RHEA:22096"/>
        <dbReference type="Rhea" id="RHEA-COMP:14527"/>
        <dbReference type="Rhea" id="RHEA-COMP:17342"/>
        <dbReference type="ChEBI" id="CHEBI:43474"/>
        <dbReference type="ChEBI" id="CHEBI:57930"/>
        <dbReference type="ChEBI" id="CHEBI:140395"/>
        <dbReference type="EC" id="2.7.7.8"/>
    </reaction>
</comment>
<comment type="cofactor">
    <cofactor evidence="1">
        <name>Mg(2+)</name>
        <dbReference type="ChEBI" id="CHEBI:18420"/>
    </cofactor>
</comment>
<comment type="subunit">
    <text evidence="1">Component of the RNA degradosome, which is a multiprotein complex involved in RNA processing and mRNA degradation.</text>
</comment>
<comment type="subcellular location">
    <subcellularLocation>
        <location evidence="1">Cytoplasm</location>
    </subcellularLocation>
</comment>
<comment type="similarity">
    <text evidence="1">Belongs to the polyribonucleotide nucleotidyltransferase family.</text>
</comment>
<comment type="sequence caution" evidence="3">
    <conflict type="erroneous initiation">
        <sequence resource="EMBL-CDS" id="BAG78974"/>
    </conflict>
</comment>
<keyword id="KW-0963">Cytoplasm</keyword>
<keyword id="KW-0460">Magnesium</keyword>
<keyword id="KW-0479">Metal-binding</keyword>
<keyword id="KW-0548">Nucleotidyltransferase</keyword>
<keyword id="KW-0694">RNA-binding</keyword>
<keyword id="KW-0808">Transferase</keyword>